<dbReference type="EC" id="2.7.11.32" evidence="1"/>
<dbReference type="EC" id="2.7.4.27" evidence="1"/>
<dbReference type="EMBL" id="AJ235270">
    <property type="protein sequence ID" value="CAA14474.1"/>
    <property type="molecule type" value="Genomic_DNA"/>
</dbReference>
<dbReference type="PIR" id="C71707">
    <property type="entry name" value="C71707"/>
</dbReference>
<dbReference type="RefSeq" id="NP_220397.1">
    <property type="nucleotide sequence ID" value="NC_000963.1"/>
</dbReference>
<dbReference type="RefSeq" id="WP_010886186.1">
    <property type="nucleotide sequence ID" value="NC_000963.1"/>
</dbReference>
<dbReference type="SMR" id="Q9ZEE1"/>
<dbReference type="STRING" id="272947.gene:17555084"/>
<dbReference type="EnsemblBacteria" id="CAA14474">
    <property type="protein sequence ID" value="CAA14474"/>
    <property type="gene ID" value="CAA14474"/>
</dbReference>
<dbReference type="KEGG" id="rpr:RP001"/>
<dbReference type="PATRIC" id="fig|272947.5.peg.1"/>
<dbReference type="eggNOG" id="COG1806">
    <property type="taxonomic scope" value="Bacteria"/>
</dbReference>
<dbReference type="HOGENOM" id="CLU_046206_2_0_5"/>
<dbReference type="OrthoDB" id="9782201at2"/>
<dbReference type="Proteomes" id="UP000002480">
    <property type="component" value="Chromosome"/>
</dbReference>
<dbReference type="GO" id="GO:0043531">
    <property type="term" value="F:ADP binding"/>
    <property type="evidence" value="ECO:0007669"/>
    <property type="project" value="UniProtKB-UniRule"/>
</dbReference>
<dbReference type="GO" id="GO:0005524">
    <property type="term" value="F:ATP binding"/>
    <property type="evidence" value="ECO:0007669"/>
    <property type="project" value="InterPro"/>
</dbReference>
<dbReference type="GO" id="GO:0016776">
    <property type="term" value="F:phosphotransferase activity, phosphate group as acceptor"/>
    <property type="evidence" value="ECO:0007669"/>
    <property type="project" value="UniProtKB-UniRule"/>
</dbReference>
<dbReference type="GO" id="GO:0004674">
    <property type="term" value="F:protein serine/threonine kinase activity"/>
    <property type="evidence" value="ECO:0007669"/>
    <property type="project" value="UniProtKB-UniRule"/>
</dbReference>
<dbReference type="Gene3D" id="3.40.50.300">
    <property type="entry name" value="P-loop containing nucleotide triphosphate hydrolases"/>
    <property type="match status" value="1"/>
</dbReference>
<dbReference type="HAMAP" id="MF_00921">
    <property type="entry name" value="PDRP"/>
    <property type="match status" value="1"/>
</dbReference>
<dbReference type="InterPro" id="IPR005177">
    <property type="entry name" value="Kinase-pyrophosphorylase"/>
</dbReference>
<dbReference type="InterPro" id="IPR027417">
    <property type="entry name" value="P-loop_NTPase"/>
</dbReference>
<dbReference type="InterPro" id="IPR026565">
    <property type="entry name" value="PPDK_reg"/>
</dbReference>
<dbReference type="NCBIfam" id="NF003742">
    <property type="entry name" value="PRK05339.1"/>
    <property type="match status" value="1"/>
</dbReference>
<dbReference type="PANTHER" id="PTHR31756">
    <property type="entry name" value="PYRUVATE, PHOSPHATE DIKINASE REGULATORY PROTEIN 1, CHLOROPLASTIC"/>
    <property type="match status" value="1"/>
</dbReference>
<dbReference type="PANTHER" id="PTHR31756:SF3">
    <property type="entry name" value="PYRUVATE, PHOSPHATE DIKINASE REGULATORY PROTEIN 1, CHLOROPLASTIC"/>
    <property type="match status" value="1"/>
</dbReference>
<dbReference type="Pfam" id="PF03618">
    <property type="entry name" value="Kinase-PPPase"/>
    <property type="match status" value="1"/>
</dbReference>
<name>PDRP_RICPR</name>
<evidence type="ECO:0000255" key="1">
    <source>
        <dbReference type="HAMAP-Rule" id="MF_00921"/>
    </source>
</evidence>
<feature type="chain" id="PRO_0000196703" description="Putative pyruvate, phosphate dikinase regulatory protein">
    <location>
        <begin position="1"/>
        <end position="273"/>
    </location>
</feature>
<feature type="binding site" evidence="1">
    <location>
        <begin position="149"/>
        <end position="156"/>
    </location>
    <ligand>
        <name>ADP</name>
        <dbReference type="ChEBI" id="CHEBI:456216"/>
    </ligand>
</feature>
<accession>Q9ZEE1</accession>
<protein>
    <recommendedName>
        <fullName evidence="1">Putative pyruvate, phosphate dikinase regulatory protein</fullName>
        <shortName evidence="1">PPDK regulatory protein</shortName>
        <ecNumber evidence="1">2.7.11.32</ecNumber>
        <ecNumber evidence="1">2.7.4.27</ecNumber>
    </recommendedName>
</protein>
<sequence>MTKLIIHLVSDSSVQTAKHAANSALAQFTSIKQKLYHWPMIRNCELLNEVLSKIESKHGIVLYTIADQELRKTLTKFCYELKIPCISVIGKIIKEMSVFSGIEIEKEQNYNYKFDKTYFDTLNAIDYAIRHDDGQMINELSESDIILIGPSRTSKTPTSVFLAYNGLKAANIPYVYNCPFPDFIEKDIDQLVVGLVINPNRLIEIREARLNLLQINENKSYTDFNIVQRECIEVRKICNQRNWPVIDVSTRSIEETAALIMRIYYNRKNKYHK</sequence>
<organism>
    <name type="scientific">Rickettsia prowazekii (strain Madrid E)</name>
    <dbReference type="NCBI Taxonomy" id="272947"/>
    <lineage>
        <taxon>Bacteria</taxon>
        <taxon>Pseudomonadati</taxon>
        <taxon>Pseudomonadota</taxon>
        <taxon>Alphaproteobacteria</taxon>
        <taxon>Rickettsiales</taxon>
        <taxon>Rickettsiaceae</taxon>
        <taxon>Rickettsieae</taxon>
        <taxon>Rickettsia</taxon>
        <taxon>typhus group</taxon>
    </lineage>
</organism>
<reference key="1">
    <citation type="journal article" date="1998" name="Nature">
        <title>The genome sequence of Rickettsia prowazekii and the origin of mitochondria.</title>
        <authorList>
            <person name="Andersson S.G.E."/>
            <person name="Zomorodipour A."/>
            <person name="Andersson J.O."/>
            <person name="Sicheritz-Ponten T."/>
            <person name="Alsmark U.C.M."/>
            <person name="Podowski R.M."/>
            <person name="Naeslund A.K."/>
            <person name="Eriksson A.-S."/>
            <person name="Winkler H.H."/>
            <person name="Kurland C.G."/>
        </authorList>
    </citation>
    <scope>NUCLEOTIDE SEQUENCE [LARGE SCALE GENOMIC DNA]</scope>
    <source>
        <strain>Madrid E</strain>
    </source>
</reference>
<proteinExistence type="inferred from homology"/>
<keyword id="KW-0418">Kinase</keyword>
<keyword id="KW-0547">Nucleotide-binding</keyword>
<keyword id="KW-1185">Reference proteome</keyword>
<keyword id="KW-0723">Serine/threonine-protein kinase</keyword>
<keyword id="KW-0808">Transferase</keyword>
<comment type="function">
    <text evidence="1">Bifunctional serine/threonine kinase and phosphorylase involved in the regulation of the pyruvate, phosphate dikinase (PPDK) by catalyzing its phosphorylation/dephosphorylation.</text>
</comment>
<comment type="catalytic activity">
    <reaction evidence="1">
        <text>N(tele)-phospho-L-histidyl/L-threonyl-[pyruvate, phosphate dikinase] + ADP = N(tele)-phospho-L-histidyl/O-phospho-L-threonyl-[pyruvate, phosphate dikinase] + AMP + H(+)</text>
        <dbReference type="Rhea" id="RHEA:43692"/>
        <dbReference type="Rhea" id="RHEA-COMP:10650"/>
        <dbReference type="Rhea" id="RHEA-COMP:10651"/>
        <dbReference type="ChEBI" id="CHEBI:15378"/>
        <dbReference type="ChEBI" id="CHEBI:30013"/>
        <dbReference type="ChEBI" id="CHEBI:61977"/>
        <dbReference type="ChEBI" id="CHEBI:83586"/>
        <dbReference type="ChEBI" id="CHEBI:456215"/>
        <dbReference type="ChEBI" id="CHEBI:456216"/>
        <dbReference type="EC" id="2.7.11.32"/>
    </reaction>
</comment>
<comment type="catalytic activity">
    <reaction evidence="1">
        <text>N(tele)-phospho-L-histidyl/O-phospho-L-threonyl-[pyruvate, phosphate dikinase] + phosphate + H(+) = N(tele)-phospho-L-histidyl/L-threonyl-[pyruvate, phosphate dikinase] + diphosphate</text>
        <dbReference type="Rhea" id="RHEA:43696"/>
        <dbReference type="Rhea" id="RHEA-COMP:10650"/>
        <dbReference type="Rhea" id="RHEA-COMP:10651"/>
        <dbReference type="ChEBI" id="CHEBI:15378"/>
        <dbReference type="ChEBI" id="CHEBI:30013"/>
        <dbReference type="ChEBI" id="CHEBI:33019"/>
        <dbReference type="ChEBI" id="CHEBI:43474"/>
        <dbReference type="ChEBI" id="CHEBI:61977"/>
        <dbReference type="ChEBI" id="CHEBI:83586"/>
        <dbReference type="EC" id="2.7.4.27"/>
    </reaction>
</comment>
<comment type="similarity">
    <text evidence="1">Belongs to the pyruvate, phosphate/water dikinase regulatory protein family. PDRP subfamily.</text>
</comment>
<gene>
    <name type="ordered locus">RP001</name>
</gene>